<organism>
    <name type="scientific">Mycobacterium tuberculosis (strain ATCC 25618 / H37Rv)</name>
    <dbReference type="NCBI Taxonomy" id="83332"/>
    <lineage>
        <taxon>Bacteria</taxon>
        <taxon>Bacillati</taxon>
        <taxon>Actinomycetota</taxon>
        <taxon>Actinomycetes</taxon>
        <taxon>Mycobacteriales</taxon>
        <taxon>Mycobacteriaceae</taxon>
        <taxon>Mycobacterium</taxon>
        <taxon>Mycobacterium tuberculosis complex</taxon>
    </lineage>
</organism>
<evidence type="ECO:0000250" key="1">
    <source>
        <dbReference type="UniProtKB" id="O05461"/>
    </source>
</evidence>
<evidence type="ECO:0000255" key="2"/>
<evidence type="ECO:0000255" key="3">
    <source>
        <dbReference type="PROSITE-ProRule" id="PRU01240"/>
    </source>
</evidence>
<evidence type="ECO:0000256" key="4">
    <source>
        <dbReference type="SAM" id="MobiDB-lite"/>
    </source>
</evidence>
<evidence type="ECO:0000269" key="5">
    <source>
    </source>
</evidence>
<evidence type="ECO:0000303" key="6">
    <source>
    </source>
</evidence>
<evidence type="ECO:0000305" key="7"/>
<evidence type="ECO:0000312" key="8">
    <source>
        <dbReference type="EMBL" id="CCP46715.1"/>
    </source>
</evidence>
<reference key="1">
    <citation type="journal article" date="1998" name="Nature">
        <title>Deciphering the biology of Mycobacterium tuberculosis from the complete genome sequence.</title>
        <authorList>
            <person name="Cole S.T."/>
            <person name="Brosch R."/>
            <person name="Parkhill J."/>
            <person name="Garnier T."/>
            <person name="Churcher C.M."/>
            <person name="Harris D.E."/>
            <person name="Gordon S.V."/>
            <person name="Eiglmeier K."/>
            <person name="Gas S."/>
            <person name="Barry C.E. III"/>
            <person name="Tekaia F."/>
            <person name="Badcock K."/>
            <person name="Basham D."/>
            <person name="Brown D."/>
            <person name="Chillingworth T."/>
            <person name="Connor R."/>
            <person name="Davies R.M."/>
            <person name="Devlin K."/>
            <person name="Feltwell T."/>
            <person name="Gentles S."/>
            <person name="Hamlin N."/>
            <person name="Holroyd S."/>
            <person name="Hornsby T."/>
            <person name="Jagels K."/>
            <person name="Krogh A."/>
            <person name="McLean J."/>
            <person name="Moule S."/>
            <person name="Murphy L.D."/>
            <person name="Oliver S."/>
            <person name="Osborne J."/>
            <person name="Quail M.A."/>
            <person name="Rajandream M.A."/>
            <person name="Rogers J."/>
            <person name="Rutter S."/>
            <person name="Seeger K."/>
            <person name="Skelton S."/>
            <person name="Squares S."/>
            <person name="Squares R."/>
            <person name="Sulston J.E."/>
            <person name="Taylor K."/>
            <person name="Whitehead S."/>
            <person name="Barrell B.G."/>
        </authorList>
    </citation>
    <scope>NUCLEOTIDE SEQUENCE [LARGE SCALE GENOMIC DNA]</scope>
    <source>
        <strain>ATCC 25618 / H37Rv</strain>
    </source>
</reference>
<reference key="2">
    <citation type="journal article" date="2000" name="Gene">
        <title>The mycosins of Mycobacterium tuberculosis H37Rv: a family of subtilisin-like serine proteases.</title>
        <authorList>
            <person name="Brown G.D."/>
            <person name="Dave J.A."/>
            <person name="Gey van Pittius N.C."/>
            <person name="Stevens L."/>
            <person name="Ehlers M.R."/>
            <person name="Beyers A.D."/>
        </authorList>
    </citation>
    <scope>SUBCELLULAR LOCATION</scope>
    <scope>INDUCTION</scope>
    <source>
        <strain>H37Rv</strain>
    </source>
</reference>
<reference key="3">
    <citation type="journal article" date="2011" name="Mol. Cell. Proteomics">
        <title>Proteogenomic analysis of Mycobacterium tuberculosis by high resolution mass spectrometry.</title>
        <authorList>
            <person name="Kelkar D.S."/>
            <person name="Kumar D."/>
            <person name="Kumar P."/>
            <person name="Balakrishnan L."/>
            <person name="Muthusamy B."/>
            <person name="Yadav A.K."/>
            <person name="Shrivastava P."/>
            <person name="Marimuthu A."/>
            <person name="Anand S."/>
            <person name="Sundaram H."/>
            <person name="Kingsbury R."/>
            <person name="Harsha H.C."/>
            <person name="Nair B."/>
            <person name="Prasad T.S."/>
            <person name="Chauhan D.S."/>
            <person name="Katoch K."/>
            <person name="Katoch V.M."/>
            <person name="Kumar P."/>
            <person name="Chaerkady R."/>
            <person name="Ramachandran S."/>
            <person name="Dash D."/>
            <person name="Pandey A."/>
        </authorList>
    </citation>
    <scope>IDENTIFICATION BY MASS SPECTROMETRY [LARGE SCALE ANALYSIS]</scope>
    <source>
        <strain>ATCC 25618 / H37Rv</strain>
    </source>
</reference>
<gene>
    <name evidence="6" type="primary">mycP2</name>
    <name evidence="8" type="ordered locus">Rv3886c</name>
</gene>
<sequence>MASPLNRPGLRAAAASAALTLVALSANVPAAQAIPPPSVDPAMVPADARPGPDQPMRRSNSCSTPITVRNPDVAQLAPGFNLVNISKAWQYSTGNGVPVAVIDTGVSPNPRLPVVPGGDYIMGEDGLSDCDAHGTVVSSIIAAAPLGILPMPRAMPATAAFPPPAGPPPVTAAPAPPVEVPPPMPPPPPVTITQTVAPPPPPPEDAGAMAPSNGPPDPQTEDEPAVPPPPPGAPDGVVGVAPHATIISIRQSSRAFEPVNPSSAGPNSDEKVKAGTLDSVARAVVHAANMGAKVINISVTACLPAAAPGDQRVLGAALWYAATVKDAVIVAAAGNDGEAGCGNNPMYDPLDPSDPRDWHQVTVVSSPSWFSDYVLSVGAVDAYGAALDKSMSGPWVGVAAPGTHIMGLSPQGGGPVNAYPPSRPGEKNMPFWGTSFSAAYVSGVAALVRAKFPELTAYQVINRIVQSAHNPPAGVDNKLGYGLVDPVAALTFNIPSGDRMAPGAQSRVITPAAPPPPPDHRARNIAIGFVGAVATGVLAMAIGARLRRAR</sequence>
<accession>O05458</accession>
<accession>F2GDP7</accession>
<accession>I6YHE0</accession>
<accession>L0TH18</accession>
<comment type="subcellular location">
    <subcellularLocation>
        <location evidence="5">Cell membrane</location>
        <topology evidence="2">Single-pass membrane protein</topology>
    </subcellularLocation>
    <text evidence="5">Cell wall-associated.</text>
</comment>
<comment type="induction">
    <text evidence="5">Constitutively expressed during growth in culture.</text>
</comment>
<comment type="similarity">
    <text evidence="7">Belongs to the peptidase S8 family.</text>
</comment>
<name>MYCP2_MYCTU</name>
<protein>
    <recommendedName>
        <fullName evidence="6">Mycosin-2</fullName>
        <ecNumber evidence="1">3.4.21.-</ecNumber>
    </recommendedName>
    <alternativeName>
        <fullName evidence="7">MycP2 protease</fullName>
    </alternativeName>
</protein>
<proteinExistence type="evidence at protein level"/>
<feature type="signal peptide" evidence="2">
    <location>
        <begin position="1"/>
        <end position="33"/>
    </location>
</feature>
<feature type="chain" id="PRO_5004157025" description="Mycosin-2">
    <location>
        <begin position="34"/>
        <end position="550"/>
    </location>
</feature>
<feature type="transmembrane region" description="Helical" evidence="2">
    <location>
        <begin position="524"/>
        <end position="544"/>
    </location>
</feature>
<feature type="domain" description="Peptidase S8" evidence="3">
    <location>
        <begin position="79"/>
        <end position="490"/>
    </location>
</feature>
<feature type="region of interest" description="Disordered" evidence="4">
    <location>
        <begin position="34"/>
        <end position="62"/>
    </location>
</feature>
<feature type="region of interest" description="Disordered" evidence="4">
    <location>
        <begin position="168"/>
        <end position="236"/>
    </location>
</feature>
<feature type="compositionally biased region" description="Pro residues" evidence="4">
    <location>
        <begin position="168"/>
        <end position="190"/>
    </location>
</feature>
<feature type="active site" description="Charge relay system" evidence="3">
    <location>
        <position position="103"/>
    </location>
</feature>
<feature type="active site" description="Charge relay system" evidence="3">
    <location>
        <position position="133"/>
    </location>
</feature>
<feature type="active site" description="Charge relay system" evidence="3">
    <location>
        <position position="435"/>
    </location>
</feature>
<keyword id="KW-1003">Cell membrane</keyword>
<keyword id="KW-0378">Hydrolase</keyword>
<keyword id="KW-0472">Membrane</keyword>
<keyword id="KW-0645">Protease</keyword>
<keyword id="KW-1185">Reference proteome</keyword>
<keyword id="KW-0720">Serine protease</keyword>
<keyword id="KW-0732">Signal</keyword>
<keyword id="KW-0812">Transmembrane</keyword>
<keyword id="KW-1133">Transmembrane helix</keyword>
<dbReference type="EC" id="3.4.21.-" evidence="1"/>
<dbReference type="EMBL" id="AL123456">
    <property type="protein sequence ID" value="CCP46715.1"/>
    <property type="molecule type" value="Genomic_DNA"/>
</dbReference>
<dbReference type="RefSeq" id="NP_218403.1">
    <property type="nucleotide sequence ID" value="NC_000962.3"/>
</dbReference>
<dbReference type="RefSeq" id="WP_003400012.1">
    <property type="nucleotide sequence ID" value="NZ_KK339374.1"/>
</dbReference>
<dbReference type="SMR" id="O05458"/>
<dbReference type="FunCoup" id="O05458">
    <property type="interactions" value="34"/>
</dbReference>
<dbReference type="STRING" id="83332.Rv3886c"/>
<dbReference type="MEROPS" id="S08.131"/>
<dbReference type="PaxDb" id="83332-Rv3886c"/>
<dbReference type="GeneID" id="45427889"/>
<dbReference type="GeneID" id="886215"/>
<dbReference type="KEGG" id="mtu:Rv3886c"/>
<dbReference type="KEGG" id="mtv:RVBD_3886c"/>
<dbReference type="PATRIC" id="fig|83332.111.peg.4327"/>
<dbReference type="TubercuList" id="Rv3886c"/>
<dbReference type="eggNOG" id="COG1404">
    <property type="taxonomic scope" value="Bacteria"/>
</dbReference>
<dbReference type="InParanoid" id="O05458"/>
<dbReference type="OrthoDB" id="9798386at2"/>
<dbReference type="PhylomeDB" id="O05458"/>
<dbReference type="Proteomes" id="UP000001584">
    <property type="component" value="Chromosome"/>
</dbReference>
<dbReference type="GO" id="GO:0005886">
    <property type="term" value="C:plasma membrane"/>
    <property type="evidence" value="ECO:0000314"/>
    <property type="project" value="MTBBASE"/>
</dbReference>
<dbReference type="GO" id="GO:0004252">
    <property type="term" value="F:serine-type endopeptidase activity"/>
    <property type="evidence" value="ECO:0000318"/>
    <property type="project" value="GO_Central"/>
</dbReference>
<dbReference type="GO" id="GO:0016485">
    <property type="term" value="P:protein processing"/>
    <property type="evidence" value="ECO:0000318"/>
    <property type="project" value="GO_Central"/>
</dbReference>
<dbReference type="Gene3D" id="3.40.50.200">
    <property type="entry name" value="Peptidase S8/S53 domain"/>
    <property type="match status" value="1"/>
</dbReference>
<dbReference type="InterPro" id="IPR000209">
    <property type="entry name" value="Peptidase_S8/S53_dom"/>
</dbReference>
<dbReference type="InterPro" id="IPR036852">
    <property type="entry name" value="Peptidase_S8/S53_dom_sf"/>
</dbReference>
<dbReference type="InterPro" id="IPR023827">
    <property type="entry name" value="Peptidase_S8_Asp-AS"/>
</dbReference>
<dbReference type="InterPro" id="IPR015500">
    <property type="entry name" value="Peptidase_S8_subtilisin-rel"/>
</dbReference>
<dbReference type="InterPro" id="IPR023834">
    <property type="entry name" value="T7SS_pept_S8A_mycosin"/>
</dbReference>
<dbReference type="NCBIfam" id="TIGR03921">
    <property type="entry name" value="T7SS_mycosin"/>
    <property type="match status" value="1"/>
</dbReference>
<dbReference type="PANTHER" id="PTHR42884:SF14">
    <property type="entry name" value="NEUROENDOCRINE CONVERTASE 1"/>
    <property type="match status" value="1"/>
</dbReference>
<dbReference type="PANTHER" id="PTHR42884">
    <property type="entry name" value="PROPROTEIN CONVERTASE SUBTILISIN/KEXIN-RELATED"/>
    <property type="match status" value="1"/>
</dbReference>
<dbReference type="Pfam" id="PF00082">
    <property type="entry name" value="Peptidase_S8"/>
    <property type="match status" value="1"/>
</dbReference>
<dbReference type="PRINTS" id="PR00723">
    <property type="entry name" value="SUBTILISIN"/>
</dbReference>
<dbReference type="SUPFAM" id="SSF52743">
    <property type="entry name" value="Subtilisin-like"/>
    <property type="match status" value="1"/>
</dbReference>
<dbReference type="PROSITE" id="PS51892">
    <property type="entry name" value="SUBTILASE"/>
    <property type="match status" value="1"/>
</dbReference>
<dbReference type="PROSITE" id="PS00136">
    <property type="entry name" value="SUBTILASE_ASP"/>
    <property type="match status" value="1"/>
</dbReference>
<dbReference type="PROSITE" id="PS00137">
    <property type="entry name" value="SUBTILASE_HIS"/>
    <property type="match status" value="1"/>
</dbReference>